<name>RL4_LIMRJ</name>
<gene>
    <name evidence="1" type="primary">rplD</name>
    <name type="ordered locus">LAR_1393</name>
</gene>
<reference key="1">
    <citation type="journal article" date="2008" name="DNA Res.">
        <title>Comparative genome analysis of Lactobacillus reuteri and Lactobacillus fermentum reveal a genomic island for reuterin and cobalamin production.</title>
        <authorList>
            <person name="Morita H."/>
            <person name="Toh H."/>
            <person name="Fukuda S."/>
            <person name="Horikawa H."/>
            <person name="Oshima K."/>
            <person name="Suzuki T."/>
            <person name="Murakami M."/>
            <person name="Hisamatsu S."/>
            <person name="Kato Y."/>
            <person name="Takizawa T."/>
            <person name="Fukuoka H."/>
            <person name="Yoshimura T."/>
            <person name="Itoh K."/>
            <person name="O'Sullivan D.J."/>
            <person name="McKay L.L."/>
            <person name="Ohno H."/>
            <person name="Kikuchi J."/>
            <person name="Masaoka T."/>
            <person name="Hattori M."/>
        </authorList>
    </citation>
    <scope>NUCLEOTIDE SEQUENCE [LARGE SCALE GENOMIC DNA]</scope>
    <source>
        <strain>JCM 1112</strain>
    </source>
</reference>
<proteinExistence type="inferred from homology"/>
<sequence length="207" mass="22290">MTSVNLYKQDGSQNGTVELNDAVFGVEPNENVVFDAILRQRASLRQGTHAVKNRSAVSGGGKKPWRQKGTGRARQGSIRSPQFRGGGIVFGPTPRSYKYSLPRKVRQLAIKSALSQKVLDNSFVVVDALNFDAPKTKEFADVMGNLNVAEKTLVVVTDDDKNAALSARNLANATVVTPAGVNILNVVDNQKIVITKSALSQVEEVLA</sequence>
<feature type="chain" id="PRO_1000142141" description="Large ribosomal subunit protein uL4">
    <location>
        <begin position="1"/>
        <end position="207"/>
    </location>
</feature>
<feature type="region of interest" description="Disordered" evidence="2">
    <location>
        <begin position="48"/>
        <end position="87"/>
    </location>
</feature>
<dbReference type="EMBL" id="AP007281">
    <property type="protein sequence ID" value="BAG25909.1"/>
    <property type="molecule type" value="Genomic_DNA"/>
</dbReference>
<dbReference type="RefSeq" id="WP_003664566.1">
    <property type="nucleotide sequence ID" value="NC_010609.1"/>
</dbReference>
<dbReference type="SMR" id="B2G8X7"/>
<dbReference type="GeneID" id="77191478"/>
<dbReference type="KEGG" id="lrf:LAR_1393"/>
<dbReference type="HOGENOM" id="CLU_041575_5_2_9"/>
<dbReference type="GO" id="GO:1990904">
    <property type="term" value="C:ribonucleoprotein complex"/>
    <property type="evidence" value="ECO:0007669"/>
    <property type="project" value="UniProtKB-KW"/>
</dbReference>
<dbReference type="GO" id="GO:0005840">
    <property type="term" value="C:ribosome"/>
    <property type="evidence" value="ECO:0007669"/>
    <property type="project" value="UniProtKB-KW"/>
</dbReference>
<dbReference type="GO" id="GO:0019843">
    <property type="term" value="F:rRNA binding"/>
    <property type="evidence" value="ECO:0007669"/>
    <property type="project" value="UniProtKB-UniRule"/>
</dbReference>
<dbReference type="GO" id="GO:0003735">
    <property type="term" value="F:structural constituent of ribosome"/>
    <property type="evidence" value="ECO:0007669"/>
    <property type="project" value="InterPro"/>
</dbReference>
<dbReference type="GO" id="GO:0006412">
    <property type="term" value="P:translation"/>
    <property type="evidence" value="ECO:0007669"/>
    <property type="project" value="UniProtKB-UniRule"/>
</dbReference>
<dbReference type="FunFam" id="3.40.1370.10:FF:000003">
    <property type="entry name" value="50S ribosomal protein L4"/>
    <property type="match status" value="1"/>
</dbReference>
<dbReference type="Gene3D" id="3.40.1370.10">
    <property type="match status" value="1"/>
</dbReference>
<dbReference type="HAMAP" id="MF_01328_B">
    <property type="entry name" value="Ribosomal_uL4_B"/>
    <property type="match status" value="1"/>
</dbReference>
<dbReference type="InterPro" id="IPR002136">
    <property type="entry name" value="Ribosomal_uL4"/>
</dbReference>
<dbReference type="InterPro" id="IPR013005">
    <property type="entry name" value="Ribosomal_uL4-like"/>
</dbReference>
<dbReference type="InterPro" id="IPR023574">
    <property type="entry name" value="Ribosomal_uL4_dom_sf"/>
</dbReference>
<dbReference type="NCBIfam" id="TIGR03953">
    <property type="entry name" value="rplD_bact"/>
    <property type="match status" value="1"/>
</dbReference>
<dbReference type="PANTHER" id="PTHR10746">
    <property type="entry name" value="50S RIBOSOMAL PROTEIN L4"/>
    <property type="match status" value="1"/>
</dbReference>
<dbReference type="PANTHER" id="PTHR10746:SF6">
    <property type="entry name" value="LARGE RIBOSOMAL SUBUNIT PROTEIN UL4M"/>
    <property type="match status" value="1"/>
</dbReference>
<dbReference type="Pfam" id="PF00573">
    <property type="entry name" value="Ribosomal_L4"/>
    <property type="match status" value="1"/>
</dbReference>
<dbReference type="SUPFAM" id="SSF52166">
    <property type="entry name" value="Ribosomal protein L4"/>
    <property type="match status" value="1"/>
</dbReference>
<protein>
    <recommendedName>
        <fullName evidence="1">Large ribosomal subunit protein uL4</fullName>
    </recommendedName>
    <alternativeName>
        <fullName evidence="3">50S ribosomal protein L4</fullName>
    </alternativeName>
</protein>
<comment type="function">
    <text evidence="1">One of the primary rRNA binding proteins, this protein initially binds near the 5'-end of the 23S rRNA. It is important during the early stages of 50S assembly. It makes multiple contacts with different domains of the 23S rRNA in the assembled 50S subunit and ribosome.</text>
</comment>
<comment type="function">
    <text evidence="1">Forms part of the polypeptide exit tunnel.</text>
</comment>
<comment type="subunit">
    <text evidence="1">Part of the 50S ribosomal subunit.</text>
</comment>
<comment type="similarity">
    <text evidence="1">Belongs to the universal ribosomal protein uL4 family.</text>
</comment>
<accession>B2G8X7</accession>
<organism>
    <name type="scientific">Limosilactobacillus reuteri subsp. reuteri (strain JCM 1112)</name>
    <name type="common">Lactobacillus reuteri</name>
    <dbReference type="NCBI Taxonomy" id="557433"/>
    <lineage>
        <taxon>Bacteria</taxon>
        <taxon>Bacillati</taxon>
        <taxon>Bacillota</taxon>
        <taxon>Bacilli</taxon>
        <taxon>Lactobacillales</taxon>
        <taxon>Lactobacillaceae</taxon>
        <taxon>Limosilactobacillus</taxon>
    </lineage>
</organism>
<keyword id="KW-0687">Ribonucleoprotein</keyword>
<keyword id="KW-0689">Ribosomal protein</keyword>
<keyword id="KW-0694">RNA-binding</keyword>
<keyword id="KW-0699">rRNA-binding</keyword>
<evidence type="ECO:0000255" key="1">
    <source>
        <dbReference type="HAMAP-Rule" id="MF_01328"/>
    </source>
</evidence>
<evidence type="ECO:0000256" key="2">
    <source>
        <dbReference type="SAM" id="MobiDB-lite"/>
    </source>
</evidence>
<evidence type="ECO:0000305" key="3"/>